<feature type="chain" id="PRO_1000049292" description="Small ribosomal subunit protein bS16">
    <location>
        <begin position="1"/>
        <end position="162"/>
    </location>
</feature>
<feature type="region of interest" description="Disordered" evidence="2">
    <location>
        <begin position="113"/>
        <end position="162"/>
    </location>
</feature>
<feature type="compositionally biased region" description="Basic residues" evidence="2">
    <location>
        <begin position="124"/>
        <end position="134"/>
    </location>
</feature>
<comment type="similarity">
    <text evidence="1">Belongs to the bacterial ribosomal protein bS16 family.</text>
</comment>
<dbReference type="EMBL" id="AM408590">
    <property type="protein sequence ID" value="CAL72919.1"/>
    <property type="molecule type" value="Genomic_DNA"/>
</dbReference>
<dbReference type="RefSeq" id="WP_003414731.1">
    <property type="nucleotide sequence ID" value="NC_008769.1"/>
</dbReference>
<dbReference type="SMR" id="A1KMQ3"/>
<dbReference type="GeneID" id="45426896"/>
<dbReference type="KEGG" id="mbb:BCG_2930c"/>
<dbReference type="HOGENOM" id="CLU_100590_1_1_11"/>
<dbReference type="Proteomes" id="UP000001472">
    <property type="component" value="Chromosome"/>
</dbReference>
<dbReference type="GO" id="GO:0005737">
    <property type="term" value="C:cytoplasm"/>
    <property type="evidence" value="ECO:0007669"/>
    <property type="project" value="UniProtKB-ARBA"/>
</dbReference>
<dbReference type="GO" id="GO:0015935">
    <property type="term" value="C:small ribosomal subunit"/>
    <property type="evidence" value="ECO:0007669"/>
    <property type="project" value="TreeGrafter"/>
</dbReference>
<dbReference type="GO" id="GO:0003735">
    <property type="term" value="F:structural constituent of ribosome"/>
    <property type="evidence" value="ECO:0007669"/>
    <property type="project" value="InterPro"/>
</dbReference>
<dbReference type="GO" id="GO:0006412">
    <property type="term" value="P:translation"/>
    <property type="evidence" value="ECO:0007669"/>
    <property type="project" value="UniProtKB-UniRule"/>
</dbReference>
<dbReference type="FunFam" id="3.30.1320.10:FF:000009">
    <property type="entry name" value="30S ribosomal protein S16"/>
    <property type="match status" value="1"/>
</dbReference>
<dbReference type="Gene3D" id="3.30.1320.10">
    <property type="match status" value="1"/>
</dbReference>
<dbReference type="HAMAP" id="MF_00385">
    <property type="entry name" value="Ribosomal_bS16"/>
    <property type="match status" value="1"/>
</dbReference>
<dbReference type="InterPro" id="IPR000307">
    <property type="entry name" value="Ribosomal_bS16"/>
</dbReference>
<dbReference type="InterPro" id="IPR020592">
    <property type="entry name" value="Ribosomal_bS16_CS"/>
</dbReference>
<dbReference type="InterPro" id="IPR023803">
    <property type="entry name" value="Ribosomal_bS16_dom_sf"/>
</dbReference>
<dbReference type="NCBIfam" id="NF011093">
    <property type="entry name" value="PRK14520.1"/>
    <property type="match status" value="1"/>
</dbReference>
<dbReference type="NCBIfam" id="TIGR00002">
    <property type="entry name" value="S16"/>
    <property type="match status" value="1"/>
</dbReference>
<dbReference type="PANTHER" id="PTHR12919">
    <property type="entry name" value="30S RIBOSOMAL PROTEIN S16"/>
    <property type="match status" value="1"/>
</dbReference>
<dbReference type="PANTHER" id="PTHR12919:SF20">
    <property type="entry name" value="SMALL RIBOSOMAL SUBUNIT PROTEIN BS16M"/>
    <property type="match status" value="1"/>
</dbReference>
<dbReference type="Pfam" id="PF00886">
    <property type="entry name" value="Ribosomal_S16"/>
    <property type="match status" value="1"/>
</dbReference>
<dbReference type="SUPFAM" id="SSF54565">
    <property type="entry name" value="Ribosomal protein S16"/>
    <property type="match status" value="1"/>
</dbReference>
<dbReference type="PROSITE" id="PS00732">
    <property type="entry name" value="RIBOSOMAL_S16"/>
    <property type="match status" value="1"/>
</dbReference>
<name>RS16_MYCBP</name>
<organism>
    <name type="scientific">Mycobacterium bovis (strain BCG / Pasteur 1173P2)</name>
    <dbReference type="NCBI Taxonomy" id="410289"/>
    <lineage>
        <taxon>Bacteria</taxon>
        <taxon>Bacillati</taxon>
        <taxon>Actinomycetota</taxon>
        <taxon>Actinomycetes</taxon>
        <taxon>Mycobacteriales</taxon>
        <taxon>Mycobacteriaceae</taxon>
        <taxon>Mycobacterium</taxon>
        <taxon>Mycobacterium tuberculosis complex</taxon>
    </lineage>
</organism>
<protein>
    <recommendedName>
        <fullName evidence="1">Small ribosomal subunit protein bS16</fullName>
    </recommendedName>
    <alternativeName>
        <fullName evidence="3">30S ribosomal protein S16</fullName>
    </alternativeName>
</protein>
<accession>A1KMQ3</accession>
<reference key="1">
    <citation type="journal article" date="2007" name="Proc. Natl. Acad. Sci. U.S.A.">
        <title>Genome plasticity of BCG and impact on vaccine efficacy.</title>
        <authorList>
            <person name="Brosch R."/>
            <person name="Gordon S.V."/>
            <person name="Garnier T."/>
            <person name="Eiglmeier K."/>
            <person name="Frigui W."/>
            <person name="Valenti P."/>
            <person name="Dos Santos S."/>
            <person name="Duthoy S."/>
            <person name="Lacroix C."/>
            <person name="Garcia-Pelayo C."/>
            <person name="Inwald J.K."/>
            <person name="Golby P."/>
            <person name="Garcia J.N."/>
            <person name="Hewinson R.G."/>
            <person name="Behr M.A."/>
            <person name="Quail M.A."/>
            <person name="Churcher C."/>
            <person name="Barrell B.G."/>
            <person name="Parkhill J."/>
            <person name="Cole S.T."/>
        </authorList>
    </citation>
    <scope>NUCLEOTIDE SEQUENCE [LARGE SCALE GENOMIC DNA]</scope>
    <source>
        <strain>BCG / Pasteur 1173P2</strain>
    </source>
</reference>
<evidence type="ECO:0000255" key="1">
    <source>
        <dbReference type="HAMAP-Rule" id="MF_00385"/>
    </source>
</evidence>
<evidence type="ECO:0000256" key="2">
    <source>
        <dbReference type="SAM" id="MobiDB-lite"/>
    </source>
</evidence>
<evidence type="ECO:0000305" key="3"/>
<keyword id="KW-0687">Ribonucleoprotein</keyword>
<keyword id="KW-0689">Ribosomal protein</keyword>
<proteinExistence type="inferred from homology"/>
<gene>
    <name evidence="1" type="primary">rpsP</name>
    <name type="ordered locus">BCG_2930c</name>
</gene>
<sequence length="162" mass="17437">MAVKIKLTRLGKIRNPQYRVAVADARTRRDGRAIEVIGRYHPKEEPSLIEINSERAQYWLSVGAQPTEPVLKLLKITGDWQKFKGLPGAQGRLKVAAPKPSKLEVFNAALAAADGGPTTEATKPKKKSPAKKAAKAAEPAPQPEQPDTPALGGEQAELTAES</sequence>